<comment type="function">
    <text evidence="1">Is probably a protein kinase regulator of UbiI activity which is involved in aerobic coenzyme Q (ubiquinone) biosynthesis.</text>
</comment>
<comment type="pathway">
    <text>Cofactor biosynthesis; ubiquinone biosynthesis [regulation].</text>
</comment>
<comment type="subcellular location">
    <subcellularLocation>
        <location evidence="1">Cell inner membrane</location>
        <topology evidence="1">Multi-pass membrane protein</topology>
    </subcellularLocation>
</comment>
<comment type="similarity">
    <text evidence="1">Belongs to the ABC1 family. UbiB subfamily.</text>
</comment>
<proteinExistence type="inferred from homology"/>
<organism>
    <name type="scientific">Escherichia coli O157:H7 (strain EC4115 / EHEC)</name>
    <dbReference type="NCBI Taxonomy" id="444450"/>
    <lineage>
        <taxon>Bacteria</taxon>
        <taxon>Pseudomonadati</taxon>
        <taxon>Pseudomonadota</taxon>
        <taxon>Gammaproteobacteria</taxon>
        <taxon>Enterobacterales</taxon>
        <taxon>Enterobacteriaceae</taxon>
        <taxon>Escherichia</taxon>
    </lineage>
</organism>
<accession>B5YY84</accession>
<dbReference type="EC" id="2.7.-.-" evidence="1"/>
<dbReference type="EMBL" id="CP001164">
    <property type="protein sequence ID" value="ACI38121.1"/>
    <property type="molecule type" value="Genomic_DNA"/>
</dbReference>
<dbReference type="RefSeq" id="WP_000187530.1">
    <property type="nucleotide sequence ID" value="NC_011353.1"/>
</dbReference>
<dbReference type="SMR" id="B5YY84"/>
<dbReference type="GeneID" id="75204829"/>
<dbReference type="KEGG" id="ecf:ECH74115_5276"/>
<dbReference type="HOGENOM" id="CLU_006533_0_0_6"/>
<dbReference type="UniPathway" id="UPA00232"/>
<dbReference type="GO" id="GO:0005886">
    <property type="term" value="C:plasma membrane"/>
    <property type="evidence" value="ECO:0007669"/>
    <property type="project" value="UniProtKB-SubCell"/>
</dbReference>
<dbReference type="GO" id="GO:0005524">
    <property type="term" value="F:ATP binding"/>
    <property type="evidence" value="ECO:0007669"/>
    <property type="project" value="UniProtKB-KW"/>
</dbReference>
<dbReference type="GO" id="GO:0004672">
    <property type="term" value="F:protein kinase activity"/>
    <property type="evidence" value="ECO:0007669"/>
    <property type="project" value="UniProtKB-UniRule"/>
</dbReference>
<dbReference type="GO" id="GO:0010795">
    <property type="term" value="P:regulation of ubiquinone biosynthetic process"/>
    <property type="evidence" value="ECO:0007669"/>
    <property type="project" value="UniProtKB-UniRule"/>
</dbReference>
<dbReference type="GO" id="GO:0006744">
    <property type="term" value="P:ubiquinone biosynthetic process"/>
    <property type="evidence" value="ECO:0007669"/>
    <property type="project" value="UniProtKB-UniPathway"/>
</dbReference>
<dbReference type="CDD" id="cd13972">
    <property type="entry name" value="UbiB"/>
    <property type="match status" value="1"/>
</dbReference>
<dbReference type="HAMAP" id="MF_00414">
    <property type="entry name" value="UbiB"/>
    <property type="match status" value="1"/>
</dbReference>
<dbReference type="InterPro" id="IPR004147">
    <property type="entry name" value="ABC1_dom"/>
</dbReference>
<dbReference type="InterPro" id="IPR011009">
    <property type="entry name" value="Kinase-like_dom_sf"/>
</dbReference>
<dbReference type="InterPro" id="IPR010232">
    <property type="entry name" value="UbiB"/>
</dbReference>
<dbReference type="InterPro" id="IPR045308">
    <property type="entry name" value="UbiB_bact"/>
</dbReference>
<dbReference type="InterPro" id="IPR050154">
    <property type="entry name" value="UbiB_kinase"/>
</dbReference>
<dbReference type="NCBIfam" id="NF003404">
    <property type="entry name" value="PRK04750.1"/>
    <property type="match status" value="1"/>
</dbReference>
<dbReference type="NCBIfam" id="TIGR01982">
    <property type="entry name" value="UbiB"/>
    <property type="match status" value="1"/>
</dbReference>
<dbReference type="PANTHER" id="PTHR10566">
    <property type="entry name" value="CHAPERONE-ACTIVITY OF BC1 COMPLEX CABC1 -RELATED"/>
    <property type="match status" value="1"/>
</dbReference>
<dbReference type="PANTHER" id="PTHR10566:SF113">
    <property type="entry name" value="PROTEIN ACTIVITY OF BC1 COMPLEX KINASE 7, CHLOROPLASTIC"/>
    <property type="match status" value="1"/>
</dbReference>
<dbReference type="Pfam" id="PF03109">
    <property type="entry name" value="ABC1"/>
    <property type="match status" value="1"/>
</dbReference>
<dbReference type="SUPFAM" id="SSF56112">
    <property type="entry name" value="Protein kinase-like (PK-like)"/>
    <property type="match status" value="1"/>
</dbReference>
<protein>
    <recommendedName>
        <fullName evidence="1">Probable protein kinase UbiB</fullName>
        <ecNumber evidence="1">2.7.-.-</ecNumber>
    </recommendedName>
    <alternativeName>
        <fullName evidence="1">Ubiquinone biosynthesis protein UbiB</fullName>
    </alternativeName>
</protein>
<gene>
    <name evidence="1" type="primary">ubiB</name>
    <name type="ordered locus">ECH74115_5276</name>
</gene>
<feature type="chain" id="PRO_1000123903" description="Probable protein kinase UbiB">
    <location>
        <begin position="1"/>
        <end position="546"/>
    </location>
</feature>
<feature type="transmembrane region" description="Helical" evidence="1">
    <location>
        <begin position="501"/>
        <end position="521"/>
    </location>
</feature>
<feature type="transmembrane region" description="Helical" evidence="1">
    <location>
        <begin position="522"/>
        <end position="542"/>
    </location>
</feature>
<feature type="domain" description="Protein kinase" evidence="1">
    <location>
        <begin position="124"/>
        <end position="502"/>
    </location>
</feature>
<feature type="active site" description="Proton acceptor" evidence="1">
    <location>
        <position position="288"/>
    </location>
</feature>
<feature type="binding site" evidence="1">
    <location>
        <begin position="130"/>
        <end position="138"/>
    </location>
    <ligand>
        <name>ATP</name>
        <dbReference type="ChEBI" id="CHEBI:30616"/>
    </ligand>
</feature>
<feature type="binding site" evidence="1">
    <location>
        <position position="153"/>
    </location>
    <ligand>
        <name>ATP</name>
        <dbReference type="ChEBI" id="CHEBI:30616"/>
    </ligand>
</feature>
<reference key="1">
    <citation type="journal article" date="2011" name="Proc. Natl. Acad. Sci. U.S.A.">
        <title>Genomic anatomy of Escherichia coli O157:H7 outbreaks.</title>
        <authorList>
            <person name="Eppinger M."/>
            <person name="Mammel M.K."/>
            <person name="Leclerc J.E."/>
            <person name="Ravel J."/>
            <person name="Cebula T.A."/>
        </authorList>
    </citation>
    <scope>NUCLEOTIDE SEQUENCE [LARGE SCALE GENOMIC DNA]</scope>
    <source>
        <strain>EC4115 / EHEC</strain>
    </source>
</reference>
<name>UBIB_ECO5E</name>
<sequence length="546" mass="63203">MTPGEVRRLYFIIRTFLSYGLDELIPKMRITLPLRLWRYSLFWMPNRHKDKLLGERLRLALQELGPVWIKFGQMLSTRRDLFPPHIADQLALLQDKVAPFDGKLAKQQIEAAMGGLPVEAWFDDFEIKPLASASIAQVHTARLKSNGKEVVIKVIRPDILPVIKADLKLIYRLARWVPRLLPDGRRLRPTEVVREYEKTLIDELNLLRESANAIQLRRNFEDSPMLYIPEVYPDYCSEGMMVMERIYGIPVSDVAALEKNGTNMKLLAERGVQVFFTQVFRDSFFHADMHPGNIFVSYEHPENPKYIGIDCGIVGSLNKEDKRYLAENFIAFFNRDYRKVAELHVDSGWVPPDTNVEEFEFAIRTVCEPIFEKPLAEISFGHVLLNLFNTARRFNMEVQPQLVLLQKTLLYVEGVGRQLYPQLDLWKTAKPFLESWIKDQVGIPALVRAFKEKAPFWVEKMPELPELVYDSLRQGKYLQHSVDKIARELQSNHVRQGQSRYFLGIGATLVLSGTFLLVSRPEWGLMPGWLMAGGLIAWFVGWRKTR</sequence>
<evidence type="ECO:0000255" key="1">
    <source>
        <dbReference type="HAMAP-Rule" id="MF_00414"/>
    </source>
</evidence>
<keyword id="KW-0067">ATP-binding</keyword>
<keyword id="KW-0997">Cell inner membrane</keyword>
<keyword id="KW-1003">Cell membrane</keyword>
<keyword id="KW-0418">Kinase</keyword>
<keyword id="KW-0472">Membrane</keyword>
<keyword id="KW-0547">Nucleotide-binding</keyword>
<keyword id="KW-0808">Transferase</keyword>
<keyword id="KW-0812">Transmembrane</keyword>
<keyword id="KW-1133">Transmembrane helix</keyword>
<keyword id="KW-0831">Ubiquinone biosynthesis</keyword>